<accession>A6QIG7</accession>
<accession>Q7WUJ0</accession>
<comment type="function">
    <text evidence="1 2">Involved in countering the first line of host defense mechanisms. Specifically inhibits the response of human neutrophils and monocytes to complement anaphylatoxin C5a and formylated peptides, like N-formyl-methionyl-leucyl-phenylalanine (fMLP). Acts by binding directly to the C5a receptor (C5aR) and formylated peptide receptor (FPR), thereby blocking the C5a- and fMLP-induced calcium responses. Prevents phagocytosis of the bacterium.</text>
</comment>
<comment type="subcellular location">
    <subcellularLocation>
        <location evidence="1">Secreted</location>
    </subcellularLocation>
</comment>
<comment type="domain">
    <text>Two distinct active sites are responsible for anti-C5aR and anti-FPR activity. They might be closely spatially related and might be overlapping.</text>
</comment>
<comment type="miscellaneous">
    <text>Encoded within a prophage region.</text>
</comment>
<comment type="similarity">
    <text evidence="5">Belongs to the CHIPS/FLIPr family.</text>
</comment>
<dbReference type="EMBL" id="AF285146">
    <property type="protein sequence ID" value="AAQ14339.1"/>
    <property type="molecule type" value="Genomic_DNA"/>
</dbReference>
<dbReference type="EMBL" id="AP009351">
    <property type="protein sequence ID" value="BAF68149.1"/>
    <property type="molecule type" value="Genomic_DNA"/>
</dbReference>
<dbReference type="RefSeq" id="WP_000727649.1">
    <property type="nucleotide sequence ID" value="NZ_JBBIAE010000010.1"/>
</dbReference>
<dbReference type="PDB" id="1XEE">
    <property type="method" value="NMR"/>
    <property type="chains" value="A=59-149"/>
</dbReference>
<dbReference type="PDB" id="2K3U">
    <property type="method" value="NMR"/>
    <property type="chains" value="A=59-149"/>
</dbReference>
<dbReference type="PDBsum" id="1XEE"/>
<dbReference type="PDBsum" id="2K3U"/>
<dbReference type="BMRB" id="A6QIG7"/>
<dbReference type="SMR" id="A6QIG7"/>
<dbReference type="KEGG" id="sae:NWMN_1877"/>
<dbReference type="HOGENOM" id="CLU_1748521_0_0_9"/>
<dbReference type="EvolutionaryTrace" id="A6QIG7"/>
<dbReference type="PRO" id="PR:A6QIG7"/>
<dbReference type="Proteomes" id="UP000006386">
    <property type="component" value="Chromosome"/>
</dbReference>
<dbReference type="GO" id="GO:0005576">
    <property type="term" value="C:extracellular region"/>
    <property type="evidence" value="ECO:0007669"/>
    <property type="project" value="UniProtKB-SubCell"/>
</dbReference>
<dbReference type="GO" id="GO:0141129">
    <property type="term" value="P:symbiont-mediated suppression of host signal transduction pathway via antagonism of host cell surface receptor"/>
    <property type="evidence" value="ECO:0000269"/>
    <property type="project" value="SigSci"/>
</dbReference>
<dbReference type="Gene3D" id="3.10.20.390">
    <property type="entry name" value="Chemotaxis-inhibiting protein CHIPS"/>
    <property type="match status" value="1"/>
</dbReference>
<dbReference type="InterPro" id="IPR020986">
    <property type="entry name" value="CHIPS"/>
</dbReference>
<dbReference type="InterPro" id="IPR038529">
    <property type="entry name" value="FLIPR/CHIP_sf"/>
</dbReference>
<dbReference type="InterPro" id="IPR023253">
    <property type="entry name" value="FLIPR/CHIPS"/>
</dbReference>
<dbReference type="NCBIfam" id="NF009591">
    <property type="entry name" value="PRK13032.1"/>
    <property type="match status" value="1"/>
</dbReference>
<dbReference type="Pfam" id="PF11434">
    <property type="entry name" value="CHIPS"/>
    <property type="match status" value="1"/>
</dbReference>
<dbReference type="PRINTS" id="PR02036">
    <property type="entry name" value="CHEMOTAXISIP"/>
</dbReference>
<dbReference type="PRINTS" id="PR02035">
    <property type="entry name" value="FLIPRCHIPS"/>
</dbReference>
<organism>
    <name type="scientific">Staphylococcus aureus (strain Newman)</name>
    <dbReference type="NCBI Taxonomy" id="426430"/>
    <lineage>
        <taxon>Bacteria</taxon>
        <taxon>Bacillati</taxon>
        <taxon>Bacillota</taxon>
        <taxon>Bacilli</taxon>
        <taxon>Bacillales</taxon>
        <taxon>Staphylococcaceae</taxon>
        <taxon>Staphylococcus</taxon>
    </lineage>
</organism>
<feature type="signal peptide" evidence="1">
    <location>
        <begin position="1"/>
        <end position="28"/>
    </location>
</feature>
<feature type="chain" id="PRO_0000319608" description="Chemotaxis inhibitory protein">
    <location>
        <begin position="29"/>
        <end position="149"/>
    </location>
</feature>
<feature type="region of interest" description="FPR-blocking activity">
    <location>
        <begin position="29"/>
        <end position="34"/>
    </location>
</feature>
<feature type="region of interest" description="C5aR-blocking activity">
    <location>
        <begin position="59"/>
        <end position="149"/>
    </location>
</feature>
<feature type="mutagenesis site" description="Abolishes FPR-blocking activity. No effect on C5aR-blocking activity." evidence="3">
    <original>F</original>
    <variation>A</variation>
    <location>
        <position position="29"/>
    </location>
</feature>
<feature type="mutagenesis site" description="Abolishes FPR-blocking activity. No effect on C5aR-blocking activity." evidence="3">
    <location>
        <position position="29"/>
    </location>
</feature>
<feature type="mutagenesis site" description="Decreases FPR-blocking activity. No effect on C5aR-blocking activity." evidence="3">
    <original>F</original>
    <variation>A</variation>
    <location>
        <position position="31"/>
    </location>
</feature>
<feature type="mutagenesis site" description="No effect." evidence="4">
    <original>K</original>
    <variation>A</variation>
    <location>
        <position position="68"/>
    </location>
</feature>
<feature type="mutagenesis site" description="Decreases C5aR-blocking activity. No effect on FPR-blocking activity." evidence="4">
    <original>R</original>
    <variation>A</variation>
    <location>
        <position position="72"/>
    </location>
</feature>
<feature type="mutagenesis site" description="Decreases both C5aR- and FPR-blocking activity." evidence="4">
    <original>R</original>
    <variation>A</variation>
    <location>
        <position position="74"/>
    </location>
</feature>
<feature type="mutagenesis site" description="No effect." evidence="4">
    <original>K</original>
    <variation>A</variation>
    <location>
        <position position="78"/>
    </location>
</feature>
<feature type="mutagenesis site" description="Slightly decreases C5aR-blocking activity. No effect on FPR-blocking activity." evidence="4">
    <original>K</original>
    <variation>A</variation>
    <location>
        <position position="79"/>
    </location>
</feature>
<feature type="mutagenesis site" description="No effect." evidence="4">
    <original>K</original>
    <variation>A</variation>
    <location>
        <position position="82"/>
    </location>
</feature>
<feature type="mutagenesis site" description="No effect." evidence="4">
    <original>K</original>
    <variation>A</variation>
    <location>
        <position position="89"/>
    </location>
</feature>
<feature type="mutagenesis site" description="No effect." evidence="4">
    <original>K</original>
    <variation>A</variation>
    <location>
        <position position="97"/>
    </location>
</feature>
<feature type="mutagenesis site" description="Decreases both C5aR- and FPR-blocking activity." evidence="4">
    <original>R</original>
    <variation>A</variation>
    <location>
        <position position="112"/>
    </location>
</feature>
<feature type="mutagenesis site" description="No effect." evidence="4">
    <original>K</original>
    <variation>A</variation>
    <location>
        <position position="113"/>
    </location>
</feature>
<feature type="mutagenesis site" description="No effect." evidence="4">
    <original>K</original>
    <variation>A</variation>
    <location>
        <position position="120"/>
    </location>
</feature>
<feature type="mutagenesis site" description="Decreases C5aR-blocking activity. No effect on FPR-blocking activity." evidence="4">
    <original>K</original>
    <variation>A</variation>
    <location>
        <position position="123"/>
    </location>
</feature>
<feature type="mutagenesis site" description="No effect." evidence="4">
    <original>K</original>
    <variation>A</variation>
    <location>
        <position position="128"/>
    </location>
</feature>
<feature type="mutagenesis site" description="No effect." evidence="4">
    <original>K</original>
    <variation>A</variation>
    <location>
        <position position="129"/>
    </location>
</feature>
<feature type="mutagenesis site" description="Slightly decreases C5aR-blocking activity. No effect on FPR-blocking activity." evidence="4">
    <original>K</original>
    <variation>A</variation>
    <location>
        <position position="133"/>
    </location>
</feature>
<feature type="mutagenesis site" description="No effect." evidence="4">
    <original>K</original>
    <variation>A</variation>
    <location>
        <position position="143"/>
    </location>
</feature>
<feature type="helix" evidence="6">
    <location>
        <begin position="66"/>
        <end position="78"/>
    </location>
</feature>
<feature type="helix" evidence="6">
    <location>
        <begin position="84"/>
        <end position="86"/>
    </location>
</feature>
<feature type="strand" evidence="6">
    <location>
        <begin position="87"/>
        <end position="95"/>
    </location>
</feature>
<feature type="strand" evidence="6">
    <location>
        <begin position="99"/>
        <end position="106"/>
    </location>
</feature>
<feature type="helix" evidence="6">
    <location>
        <begin position="110"/>
        <end position="113"/>
    </location>
</feature>
<feature type="strand" evidence="6">
    <location>
        <begin position="121"/>
        <end position="128"/>
    </location>
</feature>
<feature type="strand" evidence="6">
    <location>
        <begin position="136"/>
        <end position="139"/>
    </location>
</feature>
<protein>
    <recommendedName>
        <fullName>Chemotaxis inhibitory protein</fullName>
    </recommendedName>
    <alternativeName>
        <fullName>CHIPS</fullName>
    </alternativeName>
</protein>
<proteinExistence type="evidence at protein level"/>
<gene>
    <name type="primary">chp</name>
    <name type="ordered locus">NWMN_1877</name>
</gene>
<sequence>MKKKLATTVLALSFLTAGISTHHHSAKAFTFEPFPTNEEIESNKKMLEKEKAYKESFKNSGLPTTLGKLDERLRNYLKKGTKNSAQFEKMVILTENKGYYTVYLNTPLAEDRKNVELLGKMYKTYFFKKGESKSSYVINGPGKTNEYAY</sequence>
<reference key="1">
    <citation type="journal article" date="2004" name="J. Exp. Med.">
        <title>Chemotaxis inhibitory protein of Staphylococcus aureus, a bacterial antiinflammatory agent.</title>
        <authorList>
            <person name="de Haas C.J.C."/>
            <person name="Veldkamp K.E."/>
            <person name="Peschel A."/>
            <person name="Weerkamp F."/>
            <person name="van Wamel W.J.B."/>
            <person name="Heezius E.C.J.M."/>
            <person name="Poppelier M.J.J.G."/>
            <person name="van Kessel K.P.M."/>
            <person name="van Strijp J.A.G."/>
        </authorList>
    </citation>
    <scope>NUCLEOTIDE SEQUENCE [GENOMIC DNA]</scope>
    <scope>PROTEIN SEQUENCE OF 29-60</scope>
    <scope>FUNCTION</scope>
    <scope>SUBCELLULAR LOCATION</scope>
    <scope>PROPHAGE-ENCODED PROTEIN</scope>
</reference>
<reference key="2">
    <citation type="journal article" date="2008" name="J. Bacteriol.">
        <title>Genome sequence of Staphylococcus aureus strain Newman and comparative analysis of staphylococcal genomes: polymorphism and evolution of two major pathogenicity islands.</title>
        <authorList>
            <person name="Baba T."/>
            <person name="Bae T."/>
            <person name="Schneewind O."/>
            <person name="Takeuchi F."/>
            <person name="Hiramatsu K."/>
        </authorList>
    </citation>
    <scope>NUCLEOTIDE SEQUENCE [LARGE SCALE GENOMIC DNA]</scope>
    <source>
        <strain>Newman</strain>
    </source>
</reference>
<reference key="3">
    <citation type="journal article" date="2004" name="J. Immunol.">
        <title>Chemotaxis inhibitory protein of Staphylococcus aureus binds specifically to the C5a and formylated peptide receptor.</title>
        <authorList>
            <person name="Postma B."/>
            <person name="Poppelier M.J.J.G."/>
            <person name="van Galen J.C."/>
            <person name="Prossnitz E.R."/>
            <person name="van Strijp J.A.G."/>
            <person name="de Haas C.J.C."/>
            <person name="van Kessel K.P.M."/>
        </authorList>
    </citation>
    <scope>FUNCTION</scope>
    <scope>INTERACTION WITH HUMAN C5AR AND FPR</scope>
</reference>
<reference key="4">
    <citation type="journal article" date="2004" name="J. Immunol.">
        <title>N-terminal residues of the chemotaxis inhibitory protein of Staphylococcus aureus are essential for blocking formylated peptide receptor but not C5a receptor.</title>
        <authorList>
            <person name="Haas P.-J."/>
            <person name="de Haas C.J.C."/>
            <person name="Kleibeuker W."/>
            <person name="Poppelier M.J.J.G."/>
            <person name="van Kessel K.P.M."/>
            <person name="Kruijtzer J.A.W."/>
            <person name="Liskamp R.M.J."/>
            <person name="van Strijp J.A.G."/>
        </authorList>
    </citation>
    <scope>INTERACTION WITH HUMAN FPR</scope>
    <scope>MUTAGENESIS OF PHE-29 AND PHE-31</scope>
</reference>
<reference key="5">
    <citation type="journal article" date="2005" name="J. Biol. Chem.">
        <title>Residues 10-18 within the C5a receptor N terminus compose a binding domain for chemotaxis inhibitory protein of Staphylococcus aureus.</title>
        <authorList>
            <person name="Postma B."/>
            <person name="Kleibeuker W."/>
            <person name="Poppelier M.J.J.G."/>
            <person name="Boonstra M."/>
            <person name="van Kessel K.P.M."/>
            <person name="van Strijp J.A.G."/>
            <person name="de Haas C.J.C."/>
        </authorList>
    </citation>
    <scope>INTERACTION WITH HUMAN C5AR</scope>
</reference>
<reference key="6">
    <citation type="journal article" date="2006" name="J. Bacteriol.">
        <title>The innate immune modulators staphylococcal complement inhibitor and chemotaxis inhibitory protein of Staphylococcus aureus are located on beta-hemolysin-converting bacteriophages.</title>
        <authorList>
            <person name="van Wamel W.J.B."/>
            <person name="Rooijakkers S.H.M."/>
            <person name="Ruyken M."/>
            <person name="van Kessel K.P.M."/>
            <person name="van Strijp J.A.G."/>
        </authorList>
    </citation>
    <scope>PROPHAGE-ENCODED PROTEIN</scope>
</reference>
<reference key="7">
    <citation type="journal article" date="2006" name="Mol. Microbiol.">
        <title>Prophages of Staphylococcus aureus Newman and their contribution to virulence.</title>
        <authorList>
            <person name="Bae T."/>
            <person name="Baba T."/>
            <person name="Hiramatsu K."/>
            <person name="Schneewind O."/>
        </authorList>
    </citation>
    <scope>PROPHAGE-ENCODED PROTEIN</scope>
</reference>
<reference key="8">
    <citation type="journal article" date="2005" name="J. Mol. Biol.">
        <title>The structure of the C5a receptor-blocking domain of chemotaxis inhibitory protein of Staphylococcus aureus is related to a group of immune evasive molecules.</title>
        <authorList>
            <person name="Haas P.-J."/>
            <person name="de Haas C.J.C."/>
            <person name="Poppelier M.J.J.G."/>
            <person name="van Kessel K.P.M."/>
            <person name="van Strijp J.A.G."/>
            <person name="Dijkstra K."/>
            <person name="Scheek R.M."/>
            <person name="Fan H."/>
            <person name="Kruijtzer J.A.W."/>
            <person name="Liskamp R.M.J."/>
            <person name="Kemmink J."/>
        </authorList>
    </citation>
    <scope>STRUCTURE BY NMR OF 59-149</scope>
    <scope>MUTAGENESIS OF LYS-68; ARG-72; ARG-74; LYS-78; LYS-79; LYS-82; LYS-89; LYS-97; ARG-112; LYS-113; LYS-120; LYS-123; LYS-128; LYS-129; LYS-133 AND LYS-143</scope>
</reference>
<keyword id="KW-0002">3D-structure</keyword>
<keyword id="KW-0903">Direct protein sequencing</keyword>
<keyword id="KW-0964">Secreted</keyword>
<keyword id="KW-0732">Signal</keyword>
<keyword id="KW-0843">Virulence</keyword>
<evidence type="ECO:0000269" key="1">
    <source>
    </source>
</evidence>
<evidence type="ECO:0000269" key="2">
    <source>
    </source>
</evidence>
<evidence type="ECO:0000269" key="3">
    <source>
    </source>
</evidence>
<evidence type="ECO:0000269" key="4">
    <source>
    </source>
</evidence>
<evidence type="ECO:0000305" key="5"/>
<evidence type="ECO:0007829" key="6">
    <source>
        <dbReference type="PDB" id="1XEE"/>
    </source>
</evidence>
<name>CHIPS_STAAE</name>